<comment type="function">
    <text evidence="1">Major component of the virion core that undergoes proteolytic processing during the immature virion (IV) to mature virion (MV) transition. Essential for the formation of a structurally normal core.</text>
</comment>
<comment type="subcellular location">
    <subcellularLocation>
        <location evidence="1">Virion</location>
    </subcellularLocation>
    <text evidence="1">Localizes to the virion core wall, the mature protein accounts for 11% of the dry mass of the virion.</text>
</comment>
<comment type="PTM">
    <text evidence="1">The 73-kDa precursor is cleaved to a mature protein of 60 kDa during virion maturation. Proteolytic cleavage of major core proteins OPG129, OPG136, and OPG098, which occurs at a late stage of core formation, is required for production of infectious mature virions (MV).</text>
</comment>
<comment type="similarity">
    <text evidence="3">Belongs to the orthopoxvirus OPG129 family.</text>
</comment>
<sequence length="644" mass="72670">MEAVVNSDVFLTSNAGLKSSYTNQTLSLVDEDHIHTSDKSLSCSVCNSLSQIVDDDFISAGARNQRTKPKRTGNDQSQQPIKKDCMVSIDEVASTHDWSTRLRNDGNAIAKYLTTNKYDTSNFTIQDMLNIMNKLNIVRTNRNELFQLLSHVKSTLNNASVSVKCTHPLVLIHSRASPRIGDQLKELDKIYSPSNHHILLSTTRFQSMHFTDMSSSQDLSFIYRKPETNYYIHPILMALFGIKLPALENAYVHGDTYSLIQQLYEFRRVKSYNYMLLVNRLTEDNPIVITGVSDLISTEIQRANIHTMIRKAIMNIRMGIFYCNDDDAVDPHLMKIIHTGCSQVMTDEEQILASILSIVGFRPTLVSVARPMNGISYDMKLQAAPYIVVNPMKMITTSDSPISINSKDIYSMAFDGNSGRVVFAPPNIGYGRCSGVTHIDPLGTNVMGSAVHSPVIVNGAMMFYVERRQNKNMFGGECYTGFRSLIDDTPIDVSPEIMLNGIMYRLKSAVCYKLGDQFFDCGSSDIFLKGHYTILFTENGPWMYDPLSVFNPGARNARLMRALKNQYKKLSMDSDDGFYEWLNGDGSVFAASKQQMLMNHVANFDDDLLTMEEAMSMISRHCCILIYAQDYDQYISARHITELF</sequence>
<organism>
    <name type="scientific">Monkeypox virus</name>
    <dbReference type="NCBI Taxonomy" id="10244"/>
    <lineage>
        <taxon>Viruses</taxon>
        <taxon>Varidnaviria</taxon>
        <taxon>Bamfordvirae</taxon>
        <taxon>Nucleocytoviricota</taxon>
        <taxon>Pokkesviricetes</taxon>
        <taxon>Chitovirales</taxon>
        <taxon>Poxviridae</taxon>
        <taxon>Chordopoxvirinae</taxon>
        <taxon>Orthopoxvirus</taxon>
    </lineage>
</organism>
<keyword id="KW-1185">Reference proteome</keyword>
<keyword id="KW-0946">Virion</keyword>
<gene>
    <name type="primary">OPG129</name>
    <name type="ORF">MPXVgp114</name>
</gene>
<proteinExistence type="inferred from homology"/>
<name>PG129_MONPV</name>
<evidence type="ECO:0000250" key="1">
    <source>
        <dbReference type="UniProtKB" id="P06440"/>
    </source>
</evidence>
<evidence type="ECO:0000256" key="2">
    <source>
        <dbReference type="SAM" id="MobiDB-lite"/>
    </source>
</evidence>
<evidence type="ECO:0000305" key="3"/>
<accession>M1KJ27</accession>
<feature type="propeptide" id="PRO_0000457502" evidence="1">
    <location>
        <begin position="1"/>
        <end position="61"/>
    </location>
</feature>
<feature type="chain" id="PRO_0000457503" description="Major core protein OPG129">
    <location>
        <begin position="62"/>
        <end position="644"/>
    </location>
</feature>
<feature type="region of interest" description="Disordered" evidence="2">
    <location>
        <begin position="60"/>
        <end position="81"/>
    </location>
</feature>
<dbReference type="EMBL" id="KC257461">
    <property type="protein sequence ID" value="AGF37018.1"/>
    <property type="molecule type" value="Genomic_DNA"/>
</dbReference>
<dbReference type="EMBL" id="MT903340">
    <property type="protein sequence ID" value="QNP12984.1"/>
    <property type="molecule type" value="Genomic_DNA"/>
</dbReference>
<dbReference type="RefSeq" id="NP_536541.1">
    <property type="nucleotide sequence ID" value="NC_003310.1"/>
</dbReference>
<dbReference type="RefSeq" id="YP_010377111.1">
    <property type="nucleotide sequence ID" value="NC_063383.1"/>
</dbReference>
<dbReference type="GeneID" id="72551524"/>
<dbReference type="GeneID" id="929020"/>
<dbReference type="KEGG" id="vg:929020"/>
<dbReference type="Proteomes" id="UP000516359">
    <property type="component" value="Genome"/>
</dbReference>
<dbReference type="GO" id="GO:0044423">
    <property type="term" value="C:virion component"/>
    <property type="evidence" value="ECO:0007669"/>
    <property type="project" value="UniProtKB-KW"/>
</dbReference>
<dbReference type="InterPro" id="IPR004972">
    <property type="entry name" value="P4B"/>
</dbReference>
<dbReference type="Pfam" id="PF03292">
    <property type="entry name" value="Pox_P4B"/>
    <property type="match status" value="1"/>
</dbReference>
<protein>
    <recommendedName>
        <fullName>Major core protein OPG129</fullName>
    </recommendedName>
    <alternativeName>
        <fullName>Virion core protein 4b</fullName>
    </alternativeName>
</protein>
<reference key="1">
    <citation type="journal article" date="2013" name="Am. J. Trop. Med. Hyg.">
        <title>Detection of human monkeypox in the republic of the congo following intensive community education.</title>
        <authorList>
            <person name="Reynolds M.G."/>
            <person name="Emerson G.L."/>
            <person name="Pukuta E."/>
            <person name="Karhemere S."/>
            <person name="Muyembe J.J."/>
            <person name="Bikindou A."/>
            <person name="McCollum A.M."/>
            <person name="Moses C."/>
            <person name="Wilkins K."/>
            <person name="Zhao H."/>
            <person name="Damon I.K."/>
            <person name="Karem K.L."/>
            <person name="Li Y."/>
            <person name="Carroll D.S."/>
            <person name="Mombouli J.V."/>
        </authorList>
    </citation>
    <scope>NUCLEOTIDE SEQUENCE [GENOMIC DNA]</scope>
    <source>
        <strain>ROC2010</strain>
    </source>
</reference>
<reference key="2">
    <citation type="journal article" date="2022" name="J. Infect. Dis.">
        <title>Exportation of Monkeypox virus from the African continent.</title>
        <authorList>
            <person name="Mauldin M.R."/>
            <person name="McCollum A.M."/>
            <person name="Nakazawa Y.J."/>
            <person name="Mandra A."/>
            <person name="Whitehouse E.R."/>
            <person name="Davidson W."/>
            <person name="Zhao H."/>
            <person name="Gao J."/>
            <person name="Li Y."/>
            <person name="Doty J."/>
            <person name="Yinka-Ogunleye A."/>
            <person name="Akinpelu A."/>
            <person name="Aruna O."/>
            <person name="Naidoo D."/>
            <person name="Lewandowski K."/>
            <person name="Afrough B."/>
            <person name="Graham V."/>
            <person name="Aarons E."/>
            <person name="Hewson R."/>
            <person name="Vipond R."/>
            <person name="Dunning J."/>
            <person name="Chand M."/>
            <person name="Brown C."/>
            <person name="Cohen-Gihon I."/>
            <person name="Erez N."/>
            <person name="Shifman O."/>
            <person name="Israeli O."/>
            <person name="Sharon M."/>
            <person name="Schwartz E."/>
            <person name="Beth-Din A."/>
            <person name="Zvi A."/>
            <person name="Mak T.M."/>
            <person name="Ng Y.K."/>
            <person name="Cui L."/>
            <person name="Lin R.T.P."/>
            <person name="Olson V.A."/>
            <person name="Brooks T."/>
            <person name="Paran N."/>
            <person name="Ihekweazu C."/>
            <person name="Reynolds M.G."/>
        </authorList>
    </citation>
    <scope>NUCLEOTIDE SEQUENCE [LARGE SCALE GENOMIC DNA]</scope>
    <source>
        <strain>MPXV-M5312_HM12_Rivers</strain>
    </source>
</reference>
<organismHost>
    <name type="scientific">Cynomys gunnisoni</name>
    <name type="common">Gunnison's prairie dog</name>
    <name type="synonym">Spermophilus gunnisoni</name>
    <dbReference type="NCBI Taxonomy" id="45479"/>
</organismHost>
<organismHost>
    <name type="scientific">Cynomys leucurus</name>
    <name type="common">White-tailed prairie dog</name>
    <dbReference type="NCBI Taxonomy" id="99825"/>
</organismHost>
<organismHost>
    <name type="scientific">Cynomys ludovicianus</name>
    <name type="common">Black-tailed prairie dog</name>
    <dbReference type="NCBI Taxonomy" id="45480"/>
</organismHost>
<organismHost>
    <name type="scientific">Cynomys mexicanus</name>
    <name type="common">Mexican prairie dog</name>
    <dbReference type="NCBI Taxonomy" id="99826"/>
</organismHost>
<organismHost>
    <name type="scientific">Cynomys parvidens</name>
    <name type="common">Utah prairie dog</name>
    <dbReference type="NCBI Taxonomy" id="99827"/>
</organismHost>
<organismHost>
    <name type="scientific">Gliridae</name>
    <name type="common">dormice</name>
    <dbReference type="NCBI Taxonomy" id="30650"/>
</organismHost>
<organismHost>
    <name type="scientific">Heliosciurus ruwenzorii</name>
    <name type="common">Ruwenzori sun squirrel</name>
    <dbReference type="NCBI Taxonomy" id="226685"/>
</organismHost>
<organismHost>
    <name type="scientific">Homo sapiens</name>
    <name type="common">Human</name>
    <dbReference type="NCBI Taxonomy" id="9606"/>
</organismHost>
<organismHost>
    <name type="scientific">Mus musculus</name>
    <name type="common">Mouse</name>
    <dbReference type="NCBI Taxonomy" id="10090"/>
</organismHost>